<reference key="1">
    <citation type="journal article" date="2005" name="Nature">
        <title>The map-based sequence of the rice genome.</title>
        <authorList>
            <consortium name="International rice genome sequencing project (IRGSP)"/>
        </authorList>
    </citation>
    <scope>NUCLEOTIDE SEQUENCE [LARGE SCALE GENOMIC DNA]</scope>
    <source>
        <strain>cv. Nipponbare</strain>
    </source>
</reference>
<reference key="2">
    <citation type="journal article" date="2008" name="Nucleic Acids Res.">
        <title>The rice annotation project database (RAP-DB): 2008 update.</title>
        <authorList>
            <consortium name="The rice annotation project (RAP)"/>
        </authorList>
    </citation>
    <scope>GENOME REANNOTATION</scope>
    <source>
        <strain>cv. Nipponbare</strain>
    </source>
</reference>
<reference key="3">
    <citation type="journal article" date="2013" name="Rice">
        <title>Improvement of the Oryza sativa Nipponbare reference genome using next generation sequence and optical map data.</title>
        <authorList>
            <person name="Kawahara Y."/>
            <person name="de la Bastide M."/>
            <person name="Hamilton J.P."/>
            <person name="Kanamori H."/>
            <person name="McCombie W.R."/>
            <person name="Ouyang S."/>
            <person name="Schwartz D.C."/>
            <person name="Tanaka T."/>
            <person name="Wu J."/>
            <person name="Zhou S."/>
            <person name="Childs K.L."/>
            <person name="Davidson R.M."/>
            <person name="Lin H."/>
            <person name="Quesada-Ocampo L."/>
            <person name="Vaillancourt B."/>
            <person name="Sakai H."/>
            <person name="Lee S.S."/>
            <person name="Kim J."/>
            <person name="Numa H."/>
            <person name="Itoh T."/>
            <person name="Buell C.R."/>
            <person name="Matsumoto T."/>
        </authorList>
    </citation>
    <scope>GENOME REANNOTATION</scope>
    <source>
        <strain>cv. Nipponbare</strain>
    </source>
</reference>
<reference key="4">
    <citation type="journal article" date="2005" name="PLoS Biol.">
        <title>The genomes of Oryza sativa: a history of duplications.</title>
        <authorList>
            <person name="Yu J."/>
            <person name="Wang J."/>
            <person name="Lin W."/>
            <person name="Li S."/>
            <person name="Li H."/>
            <person name="Zhou J."/>
            <person name="Ni P."/>
            <person name="Dong W."/>
            <person name="Hu S."/>
            <person name="Zeng C."/>
            <person name="Zhang J."/>
            <person name="Zhang Y."/>
            <person name="Li R."/>
            <person name="Xu Z."/>
            <person name="Li S."/>
            <person name="Li X."/>
            <person name="Zheng H."/>
            <person name="Cong L."/>
            <person name="Lin L."/>
            <person name="Yin J."/>
            <person name="Geng J."/>
            <person name="Li G."/>
            <person name="Shi J."/>
            <person name="Liu J."/>
            <person name="Lv H."/>
            <person name="Li J."/>
            <person name="Wang J."/>
            <person name="Deng Y."/>
            <person name="Ran L."/>
            <person name="Shi X."/>
            <person name="Wang X."/>
            <person name="Wu Q."/>
            <person name="Li C."/>
            <person name="Ren X."/>
            <person name="Wang J."/>
            <person name="Wang X."/>
            <person name="Li D."/>
            <person name="Liu D."/>
            <person name="Zhang X."/>
            <person name="Ji Z."/>
            <person name="Zhao W."/>
            <person name="Sun Y."/>
            <person name="Zhang Z."/>
            <person name="Bao J."/>
            <person name="Han Y."/>
            <person name="Dong L."/>
            <person name="Ji J."/>
            <person name="Chen P."/>
            <person name="Wu S."/>
            <person name="Liu J."/>
            <person name="Xiao Y."/>
            <person name="Bu D."/>
            <person name="Tan J."/>
            <person name="Yang L."/>
            <person name="Ye C."/>
            <person name="Zhang J."/>
            <person name="Xu J."/>
            <person name="Zhou Y."/>
            <person name="Yu Y."/>
            <person name="Zhang B."/>
            <person name="Zhuang S."/>
            <person name="Wei H."/>
            <person name="Liu B."/>
            <person name="Lei M."/>
            <person name="Yu H."/>
            <person name="Li Y."/>
            <person name="Xu H."/>
            <person name="Wei S."/>
            <person name="He X."/>
            <person name="Fang L."/>
            <person name="Zhang Z."/>
            <person name="Zhang Y."/>
            <person name="Huang X."/>
            <person name="Su Z."/>
            <person name="Tong W."/>
            <person name="Li J."/>
            <person name="Tong Z."/>
            <person name="Li S."/>
            <person name="Ye J."/>
            <person name="Wang L."/>
            <person name="Fang L."/>
            <person name="Lei T."/>
            <person name="Chen C.-S."/>
            <person name="Chen H.-C."/>
            <person name="Xu Z."/>
            <person name="Li H."/>
            <person name="Huang H."/>
            <person name="Zhang F."/>
            <person name="Xu H."/>
            <person name="Li N."/>
            <person name="Zhao C."/>
            <person name="Li S."/>
            <person name="Dong L."/>
            <person name="Huang Y."/>
            <person name="Li L."/>
            <person name="Xi Y."/>
            <person name="Qi Q."/>
            <person name="Li W."/>
            <person name="Zhang B."/>
            <person name="Hu W."/>
            <person name="Zhang Y."/>
            <person name="Tian X."/>
            <person name="Jiao Y."/>
            <person name="Liang X."/>
            <person name="Jin J."/>
            <person name="Gao L."/>
            <person name="Zheng W."/>
            <person name="Hao B."/>
            <person name="Liu S.-M."/>
            <person name="Wang W."/>
            <person name="Yuan L."/>
            <person name="Cao M."/>
            <person name="McDermott J."/>
            <person name="Samudrala R."/>
            <person name="Wang J."/>
            <person name="Wong G.K.-S."/>
            <person name="Yang H."/>
        </authorList>
    </citation>
    <scope>NUCLEOTIDE SEQUENCE [LARGE SCALE GENOMIC DNA]</scope>
    <source>
        <strain>cv. Nipponbare</strain>
    </source>
</reference>
<reference key="5">
    <citation type="journal article" date="2003" name="Science">
        <title>Collection, mapping, and annotation of over 28,000 cDNA clones from japonica rice.</title>
        <authorList>
            <consortium name="The rice full-length cDNA consortium"/>
        </authorList>
    </citation>
    <scope>NUCLEOTIDE SEQUENCE [LARGE SCALE MRNA]</scope>
    <source>
        <strain>cv. Nipponbare</strain>
    </source>
</reference>
<reference key="6">
    <citation type="journal article" date="2007" name="Proc. Natl. Acad. Sci. U.S.A.">
        <title>The transcription factor IDEF1 regulates the response to and tolerance of iron deficiency in plants.</title>
        <authorList>
            <person name="Kobayashi T."/>
            <person name="Ogo Y."/>
            <person name="Nakanishi Itai R."/>
            <person name="Nakanishi H."/>
            <person name="Takahashi M."/>
            <person name="Mori S."/>
            <person name="Nishizawa N.K."/>
        </authorList>
    </citation>
    <scope>IDENTIFICATION</scope>
    <scope>FUNCTION</scope>
    <scope>SUBCELLULAR LOCATION</scope>
    <scope>TISSUE SPECIFICITY</scope>
    <source>
        <strain>cv. Nipponbare</strain>
    </source>
</reference>
<reference key="7">
    <citation type="journal article" date="2016" name="Sci. Rep.">
        <title>CSN6, a subunit of the COP9 signalosome, is involved in early response to iron deficiency in Oryza sativa.</title>
        <authorList>
            <person name="Tan S."/>
            <person name="Liu F."/>
            <person name="Pan X.X."/>
            <person name="Zang Y.P."/>
            <person name="Jin F."/>
            <person name="Zu W.X."/>
            <person name="Qi X.T."/>
            <person name="Xiao W."/>
            <person name="Yin L.P."/>
        </authorList>
    </citation>
    <scope>INDUCTION</scope>
    <scope>UBIQUITINATION</scope>
</reference>
<dbReference type="EMBL" id="AP005406">
    <property type="protein sequence ID" value="BAD03551.1"/>
    <property type="molecule type" value="Genomic_DNA"/>
</dbReference>
<dbReference type="EMBL" id="AP008214">
    <property type="protein sequence ID" value="BAF22671.1"/>
    <property type="molecule type" value="Genomic_DNA"/>
</dbReference>
<dbReference type="EMBL" id="AP014964">
    <property type="protein sequence ID" value="BAT03400.1"/>
    <property type="molecule type" value="Genomic_DNA"/>
</dbReference>
<dbReference type="EMBL" id="CM000145">
    <property type="protein sequence ID" value="EEE67890.1"/>
    <property type="molecule type" value="Genomic_DNA"/>
</dbReference>
<dbReference type="EMBL" id="AK107456">
    <property type="status" value="NOT_ANNOTATED_CDS"/>
    <property type="molecule type" value="mRNA"/>
</dbReference>
<dbReference type="EMBL" id="BR000654">
    <property type="protein sequence ID" value="FAA00380.1"/>
    <property type="molecule type" value="mRNA"/>
</dbReference>
<dbReference type="RefSeq" id="XP_015648159.1">
    <property type="nucleotide sequence ID" value="XM_015792673.1"/>
</dbReference>
<dbReference type="SMR" id="Q6Z1Z3"/>
<dbReference type="FunCoup" id="Q6Z1Z3">
    <property type="interactions" value="26"/>
</dbReference>
<dbReference type="STRING" id="39947.Q6Z1Z3"/>
<dbReference type="PaxDb" id="39947-Q6Z1Z3"/>
<dbReference type="EnsemblPlants" id="Os08t0101000-01">
    <property type="protein sequence ID" value="Os08t0101000-01"/>
    <property type="gene ID" value="Os08g0101000"/>
</dbReference>
<dbReference type="Gramene" id="Os08t0101000-01">
    <property type="protein sequence ID" value="Os08t0101000-01"/>
    <property type="gene ID" value="Os08g0101000"/>
</dbReference>
<dbReference type="KEGG" id="dosa:Os08g0101000"/>
<dbReference type="eggNOG" id="ENOG502S3BX">
    <property type="taxonomic scope" value="Eukaryota"/>
</dbReference>
<dbReference type="HOGENOM" id="CLU_025764_1_0_1"/>
<dbReference type="InParanoid" id="Q6Z1Z3"/>
<dbReference type="OMA" id="MYILDSA"/>
<dbReference type="OrthoDB" id="757982at2759"/>
<dbReference type="Proteomes" id="UP000000763">
    <property type="component" value="Chromosome 8"/>
</dbReference>
<dbReference type="Proteomes" id="UP000007752">
    <property type="component" value="Chromosome 8"/>
</dbReference>
<dbReference type="Proteomes" id="UP000059680">
    <property type="component" value="Chromosome 8"/>
</dbReference>
<dbReference type="GO" id="GO:0005634">
    <property type="term" value="C:nucleus"/>
    <property type="evidence" value="ECO:0000314"/>
    <property type="project" value="UniProtKB"/>
</dbReference>
<dbReference type="GO" id="GO:0003700">
    <property type="term" value="F:DNA-binding transcription factor activity"/>
    <property type="evidence" value="ECO:0000314"/>
    <property type="project" value="UniProtKB"/>
</dbReference>
<dbReference type="GO" id="GO:0000976">
    <property type="term" value="F:transcription cis-regulatory region binding"/>
    <property type="evidence" value="ECO:0000314"/>
    <property type="project" value="UniProtKB"/>
</dbReference>
<dbReference type="GO" id="GO:0006355">
    <property type="term" value="P:regulation of DNA-templated transcription"/>
    <property type="evidence" value="ECO:0000314"/>
    <property type="project" value="UniProtKB"/>
</dbReference>
<dbReference type="CDD" id="cd10017">
    <property type="entry name" value="B3_DNA"/>
    <property type="match status" value="1"/>
</dbReference>
<dbReference type="FunFam" id="2.40.330.10:FF:000003">
    <property type="entry name" value="B3 domain-containing transcription factor FUS3"/>
    <property type="match status" value="1"/>
</dbReference>
<dbReference type="Gene3D" id="2.40.330.10">
    <property type="entry name" value="DNA-binding pseudobarrel domain"/>
    <property type="match status" value="1"/>
</dbReference>
<dbReference type="InterPro" id="IPR003340">
    <property type="entry name" value="B3_DNA-bd"/>
</dbReference>
<dbReference type="InterPro" id="IPR015300">
    <property type="entry name" value="DNA-bd_pseudobarrel_sf"/>
</dbReference>
<dbReference type="InterPro" id="IPR044800">
    <property type="entry name" value="LEC2-like"/>
</dbReference>
<dbReference type="PANTHER" id="PTHR31140:SF12">
    <property type="entry name" value="B3 DOMAIN-CONTAINING PROTEIN OS04G0676650-RELATED"/>
    <property type="match status" value="1"/>
</dbReference>
<dbReference type="PANTHER" id="PTHR31140">
    <property type="entry name" value="B3 DOMAIN-CONTAINING TRANSCRIPTION FACTOR ABI3"/>
    <property type="match status" value="1"/>
</dbReference>
<dbReference type="Pfam" id="PF02362">
    <property type="entry name" value="B3"/>
    <property type="match status" value="1"/>
</dbReference>
<dbReference type="SMART" id="SM01019">
    <property type="entry name" value="B3"/>
    <property type="match status" value="1"/>
</dbReference>
<dbReference type="SUPFAM" id="SSF101936">
    <property type="entry name" value="DNA-binding pseudobarrel domain"/>
    <property type="match status" value="1"/>
</dbReference>
<dbReference type="PROSITE" id="PS50863">
    <property type="entry name" value="B3"/>
    <property type="match status" value="1"/>
</dbReference>
<keyword id="KW-0238">DNA-binding</keyword>
<keyword id="KW-0539">Nucleus</keyword>
<keyword id="KW-1185">Reference proteome</keyword>
<keyword id="KW-0804">Transcription</keyword>
<keyword id="KW-0805">Transcription regulation</keyword>
<keyword id="KW-0832">Ubl conjugation</keyword>
<sequence length="362" mass="39942">MGQMDGGDGGGGGHPYHYQALLAAVHQQTVPFPNPFPAPSSGAEPPHPHNHNHNHNHNHNIHNSHNHNHNHNAAPHPCHTPTPTPTPRGFADWSASTSAFTSLAAHSSTAPSNAVHYSFSPCYAFWTHYMLNKNAYPTSFPAPHDDHLRLANNNHPRDAPGPASSYGVESFTSPSMAPNICTHMPPIEGPISAKEDKKPEILPRVVKSSDELETRNSNVEFHSETVGTLPESKQGHDSRATKLLNSGEYQVILRKELTKSDVGNVGRIVLPKKDAEASLPPLLQRDPLILHMDDMVLPVTWKFKYRYWPNNKSRMYILDSAGEFLKTHGLQAGDVIIIYKNLAPGKFIIRGEKAIHQQTTNP</sequence>
<organism>
    <name type="scientific">Oryza sativa subsp. japonica</name>
    <name type="common">Rice</name>
    <dbReference type="NCBI Taxonomy" id="39947"/>
    <lineage>
        <taxon>Eukaryota</taxon>
        <taxon>Viridiplantae</taxon>
        <taxon>Streptophyta</taxon>
        <taxon>Embryophyta</taxon>
        <taxon>Tracheophyta</taxon>
        <taxon>Spermatophyta</taxon>
        <taxon>Magnoliopsida</taxon>
        <taxon>Liliopsida</taxon>
        <taxon>Poales</taxon>
        <taxon>Poaceae</taxon>
        <taxon>BOP clade</taxon>
        <taxon>Oryzoideae</taxon>
        <taxon>Oryzeae</taxon>
        <taxon>Oryzinae</taxon>
        <taxon>Oryza</taxon>
        <taxon>Oryza sativa</taxon>
    </lineage>
</organism>
<proteinExistence type="evidence at protein level"/>
<accession>Q6Z1Z3</accession>
<accession>A0A0P0XAM4</accession>
<accession>A9JTY5</accession>
<evidence type="ECO:0000255" key="1">
    <source>
        <dbReference type="PROSITE-ProRule" id="PRU00326"/>
    </source>
</evidence>
<evidence type="ECO:0000256" key="2">
    <source>
        <dbReference type="SAM" id="MobiDB-lite"/>
    </source>
</evidence>
<evidence type="ECO:0000269" key="3">
    <source>
    </source>
</evidence>
<evidence type="ECO:0000269" key="4">
    <source>
    </source>
</evidence>
<evidence type="ECO:0000305" key="5"/>
<feature type="chain" id="PRO_0000376938" description="B3 domain-containing protein IDEF1">
    <location>
        <begin position="1"/>
        <end position="362"/>
    </location>
</feature>
<feature type="DNA-binding region" description="TF-B3" evidence="1">
    <location>
        <begin position="253"/>
        <end position="355"/>
    </location>
</feature>
<feature type="region of interest" description="Disordered" evidence="2">
    <location>
        <begin position="30"/>
        <end position="91"/>
    </location>
</feature>
<feature type="compositionally biased region" description="Basic residues" evidence="2">
    <location>
        <begin position="48"/>
        <end position="70"/>
    </location>
</feature>
<feature type="sequence conflict" description="In Ref. 5; AK107456." evidence="5" ref="5">
    <original>L</original>
    <variation>F</variation>
    <location>
        <position position="229"/>
    </location>
</feature>
<protein>
    <recommendedName>
        <fullName>B3 domain-containing protein IDEF1</fullName>
    </recommendedName>
    <alternativeName>
        <fullName>Protein IRON DEFICIENCY-RESPONSIVE ELEMENT FACTOR 1</fullName>
    </alternativeName>
</protein>
<name>IDEF1_ORYSJ</name>
<comment type="function">
    <text evidence="3">Transcription regulator involved in iron deficiency response and tolerance. May regulate directly iron transporters or other transcription factors involved in iron-deficiency response. Binds specifically to the DNA sequence 5'-CATGC-3' of the IDE1 element found in the promoter of the barley iron deficiency-inducible gene IDS2.</text>
</comment>
<comment type="subcellular location">
    <subcellularLocation>
        <location evidence="1 3">Nucleus</location>
    </subcellularLocation>
</comment>
<comment type="tissue specificity">
    <text evidence="3">Expressed in roots.</text>
</comment>
<comment type="induction">
    <text evidence="4">Up-regulated during the early stage of iron deficiency (at protein level).</text>
</comment>
<comment type="PTM">
    <text evidence="4">Polyubiquitinated (PubMed:27137867). Ubiquitination leads to its subsequent degradation via the proteasome pathway (PubMed:27137867).</text>
</comment>
<gene>
    <name type="primary">IDEF1</name>
    <name type="ordered locus">Os08g0101000</name>
    <name type="ordered locus">LOC_Os08g01090</name>
    <name type="ORF">B1147B12.12</name>
    <name type="ORF">OsJ_25718</name>
</gene>